<feature type="chain" id="PRO_0000405522" description="Outer spore wall protein 5">
    <location>
        <begin position="1"/>
        <end position="157"/>
    </location>
</feature>
<feature type="topological domain" description="Cytoplasmic" evidence="2">
    <location>
        <begin position="1"/>
        <end position="7"/>
    </location>
</feature>
<feature type="transmembrane region" description="Helical" evidence="2">
    <location>
        <begin position="8"/>
        <end position="28"/>
    </location>
</feature>
<feature type="topological domain" description="Extracellular" evidence="2">
    <location>
        <position position="29"/>
    </location>
</feature>
<feature type="transmembrane region" description="Helical" evidence="2">
    <location>
        <begin position="30"/>
        <end position="50"/>
    </location>
</feature>
<feature type="topological domain" description="Cytoplasmic" evidence="2">
    <location>
        <begin position="51"/>
        <end position="157"/>
    </location>
</feature>
<feature type="region of interest" description="Disordered" evidence="3">
    <location>
        <begin position="104"/>
        <end position="157"/>
    </location>
</feature>
<feature type="compositionally biased region" description="Polar residues" evidence="3">
    <location>
        <begin position="104"/>
        <end position="115"/>
    </location>
</feature>
<proteinExistence type="inferred from homology"/>
<organism>
    <name type="scientific">Eremothecium gossypii (strain ATCC 10895 / CBS 109.51 / FGSC 9923 / NRRL Y-1056)</name>
    <name type="common">Yeast</name>
    <name type="synonym">Ashbya gossypii</name>
    <dbReference type="NCBI Taxonomy" id="284811"/>
    <lineage>
        <taxon>Eukaryota</taxon>
        <taxon>Fungi</taxon>
        <taxon>Dikarya</taxon>
        <taxon>Ascomycota</taxon>
        <taxon>Saccharomycotina</taxon>
        <taxon>Saccharomycetes</taxon>
        <taxon>Saccharomycetales</taxon>
        <taxon>Saccharomycetaceae</taxon>
        <taxon>Eremothecium</taxon>
    </lineage>
</organism>
<gene>
    <name type="primary">OSW5</name>
    <name type="ordered locus">ADR267W</name>
</gene>
<evidence type="ECO:0000250" key="1"/>
<evidence type="ECO:0000255" key="2"/>
<evidence type="ECO:0000256" key="3">
    <source>
        <dbReference type="SAM" id="MobiDB-lite"/>
    </source>
</evidence>
<evidence type="ECO:0000305" key="4"/>
<dbReference type="EMBL" id="AE016817">
    <property type="protein sequence ID" value="AAS52187.1"/>
    <property type="molecule type" value="Genomic_DNA"/>
</dbReference>
<dbReference type="RefSeq" id="NP_984363.1">
    <property type="nucleotide sequence ID" value="NM_209716.1"/>
</dbReference>
<dbReference type="FunCoup" id="Q759K9">
    <property type="interactions" value="12"/>
</dbReference>
<dbReference type="STRING" id="284811.Q759K9"/>
<dbReference type="EnsemblFungi" id="AAS52187">
    <property type="protein sequence ID" value="AAS52187"/>
    <property type="gene ID" value="AGOS_ADR267W"/>
</dbReference>
<dbReference type="GeneID" id="4620525"/>
<dbReference type="KEGG" id="ago:AGOS_ADR267W"/>
<dbReference type="eggNOG" id="ENOG502SA41">
    <property type="taxonomic scope" value="Eukaryota"/>
</dbReference>
<dbReference type="HOGENOM" id="CLU_1677421_0_0_1"/>
<dbReference type="InParanoid" id="Q759K9"/>
<dbReference type="OrthoDB" id="4070176at2759"/>
<dbReference type="Proteomes" id="UP000000591">
    <property type="component" value="Chromosome IV"/>
</dbReference>
<dbReference type="GO" id="GO:0016020">
    <property type="term" value="C:membrane"/>
    <property type="evidence" value="ECO:0007669"/>
    <property type="project" value="UniProtKB-SubCell"/>
</dbReference>
<dbReference type="GO" id="GO:0030435">
    <property type="term" value="P:sporulation resulting in formation of a cellular spore"/>
    <property type="evidence" value="ECO:0007669"/>
    <property type="project" value="UniProtKB-KW"/>
</dbReference>
<dbReference type="InterPro" id="IPR031430">
    <property type="entry name" value="Osw5"/>
</dbReference>
<dbReference type="Pfam" id="PF17062">
    <property type="entry name" value="Osw5"/>
    <property type="match status" value="1"/>
</dbReference>
<reference key="1">
    <citation type="journal article" date="2004" name="Science">
        <title>The Ashbya gossypii genome as a tool for mapping the ancient Saccharomyces cerevisiae genome.</title>
        <authorList>
            <person name="Dietrich F.S."/>
            <person name="Voegeli S."/>
            <person name="Brachat S."/>
            <person name="Lerch A."/>
            <person name="Gates K."/>
            <person name="Steiner S."/>
            <person name="Mohr C."/>
            <person name="Poehlmann R."/>
            <person name="Luedi P."/>
            <person name="Choi S."/>
            <person name="Wing R.A."/>
            <person name="Flavier A."/>
            <person name="Gaffney T.D."/>
            <person name="Philippsen P."/>
        </authorList>
    </citation>
    <scope>NUCLEOTIDE SEQUENCE [LARGE SCALE GENOMIC DNA]</scope>
    <source>
        <strain>ATCC 10895 / CBS 109.51 / FGSC 9923 / NRRL Y-1056</strain>
    </source>
</reference>
<reference key="2">
    <citation type="journal article" date="2013" name="G3 (Bethesda)">
        <title>Genomes of Ashbya fungi isolated from insects reveal four mating-type loci, numerous translocations, lack of transposons, and distinct gene duplications.</title>
        <authorList>
            <person name="Dietrich F.S."/>
            <person name="Voegeli S."/>
            <person name="Kuo S."/>
            <person name="Philippsen P."/>
        </authorList>
    </citation>
    <scope>GENOME REANNOTATION</scope>
    <source>
        <strain>ATCC 10895 / CBS 109.51 / FGSC 9923 / NRRL Y-1056</strain>
    </source>
</reference>
<comment type="function">
    <text evidence="1">Involved in spore wall assembly.</text>
</comment>
<comment type="subcellular location">
    <subcellularLocation>
        <location evidence="1">Membrane</location>
        <topology evidence="1">Multi-pass membrane protein</topology>
    </subcellularLocation>
</comment>
<comment type="similarity">
    <text evidence="4">Belongs to the OSW5 family.</text>
</comment>
<protein>
    <recommendedName>
        <fullName>Outer spore wall protein 5</fullName>
    </recommendedName>
</protein>
<keyword id="KW-0472">Membrane</keyword>
<keyword id="KW-1185">Reference proteome</keyword>
<keyword id="KW-0749">Sporulation</keyword>
<keyword id="KW-0812">Transmembrane</keyword>
<keyword id="KW-1133">Transmembrane helix</keyword>
<name>OSW5_EREGS</name>
<accession>Q759K9</accession>
<sequence length="157" mass="16476">MSLWSFAVFWFYLASFFVVGTLAAVLVLPFMAASLLFATGVVICGFFSNLSFRSAQLVYDQFVGTLQLTLQHMAEQVPPASDMQQPSGSTIDTGAMLAHTFDSSSYGATTQTGSGPESGPVPELGSEVSASPSPELAALPVAHKRSGRRTGTLASGM</sequence>